<gene>
    <name evidence="1" type="primary">NP</name>
</gene>
<feature type="chain" id="PRO_0000079073" description="Nucleoprotein">
    <location>
        <begin position="1"/>
        <end position="498"/>
    </location>
</feature>
<feature type="region of interest" description="Disordered" evidence="2">
    <location>
        <begin position="1"/>
        <end position="21"/>
    </location>
</feature>
<feature type="short sequence motif" description="Unconventional nuclear localization signal" evidence="1">
    <location>
        <begin position="1"/>
        <end position="18"/>
    </location>
</feature>
<feature type="short sequence motif" description="Bipartite nuclear localization signal" evidence="1">
    <location>
        <begin position="198"/>
        <end position="216"/>
    </location>
</feature>
<proteinExistence type="inferred from homology"/>
<sequence length="498" mass="56284">MASQGTKRSYEQMETGGERQNATEIRASVGRMVGGIGRFYIQMCTELKLSDYEGRLIQNSITIERMVLSAFDERRNKYLEEHPSAGKDPKKTGGPIYRRRDGKWMRELILYDKEEIRRIWRQANNGEDATAGLTHLMIWHSNLNDATYQRTRALVRTGMDPRMCSLMQGSTLPRRSGAAGAAVKGVGTMVMELIRMIKRGINDRNFWRGENGRRTRIAYERMCNILKGKFQTAAQRAMMDQVRESRNPGNAEIEDLIFLARSALILRGSVAHKSCLPACVYGLAVASGYDFEREGYSLVGIDPFRLLQNSQVFSLIRPNENPAHKSQLVWMACHSAAFEDLRVSSFIRGTRVVPRGQLSTRGVQIASNENMETMDSSTLELRSRYWAIRTRSGGNTNQQRASAGQISVQPTFSVQRNLPFERATIMAAFTGNTEGRTSDMRTEIIRMMESARPEDVSFQGRGVFELSDEKATNPIVPSFDMSNEGSYFFGDNAEEYDN</sequence>
<organism>
    <name type="scientific">Influenza A virus (strain A/Mallard/Astrakhan/263/1982 H14N5)</name>
    <name type="common">Influenza A virus (strain A/Mallard/Gurjev/263/1982 H14N5)</name>
    <dbReference type="NCBI Taxonomy" id="352564"/>
    <lineage>
        <taxon>Viruses</taxon>
        <taxon>Riboviria</taxon>
        <taxon>Orthornavirae</taxon>
        <taxon>Negarnaviricota</taxon>
        <taxon>Polyploviricotina</taxon>
        <taxon>Insthoviricetes</taxon>
        <taxon>Articulavirales</taxon>
        <taxon>Orthomyxoviridae</taxon>
        <taxon>Alphainfluenzavirus</taxon>
        <taxon>Alphainfluenzavirus influenzae</taxon>
        <taxon>Influenza A virus</taxon>
    </lineage>
</organism>
<dbReference type="EMBL" id="M63785">
    <property type="protein sequence ID" value="AAA52246.1"/>
    <property type="molecule type" value="Genomic_RNA"/>
</dbReference>
<dbReference type="SMR" id="P69298"/>
<dbReference type="GO" id="GO:0019029">
    <property type="term" value="C:helical viral capsid"/>
    <property type="evidence" value="ECO:0007669"/>
    <property type="project" value="UniProtKB-UniRule"/>
</dbReference>
<dbReference type="GO" id="GO:0043657">
    <property type="term" value="C:host cell"/>
    <property type="evidence" value="ECO:0007669"/>
    <property type="project" value="GOC"/>
</dbReference>
<dbReference type="GO" id="GO:0042025">
    <property type="term" value="C:host cell nucleus"/>
    <property type="evidence" value="ECO:0007669"/>
    <property type="project" value="UniProtKB-SubCell"/>
</dbReference>
<dbReference type="GO" id="GO:1990904">
    <property type="term" value="C:ribonucleoprotein complex"/>
    <property type="evidence" value="ECO:0007669"/>
    <property type="project" value="UniProtKB-KW"/>
</dbReference>
<dbReference type="GO" id="GO:0019013">
    <property type="term" value="C:viral nucleocapsid"/>
    <property type="evidence" value="ECO:0007669"/>
    <property type="project" value="UniProtKB-UniRule"/>
</dbReference>
<dbReference type="GO" id="GO:0003723">
    <property type="term" value="F:RNA binding"/>
    <property type="evidence" value="ECO:0007669"/>
    <property type="project" value="UniProtKB-UniRule"/>
</dbReference>
<dbReference type="GO" id="GO:0005198">
    <property type="term" value="F:structural molecule activity"/>
    <property type="evidence" value="ECO:0007669"/>
    <property type="project" value="UniProtKB-UniRule"/>
</dbReference>
<dbReference type="GO" id="GO:0046718">
    <property type="term" value="P:symbiont entry into host cell"/>
    <property type="evidence" value="ECO:0007669"/>
    <property type="project" value="UniProtKB-KW"/>
</dbReference>
<dbReference type="GO" id="GO:0075732">
    <property type="term" value="P:viral penetration into host nucleus"/>
    <property type="evidence" value="ECO:0007669"/>
    <property type="project" value="UniProtKB-UniRule"/>
</dbReference>
<dbReference type="HAMAP" id="MF_04070">
    <property type="entry name" value="INFV_NCAP"/>
    <property type="match status" value="1"/>
</dbReference>
<dbReference type="InterPro" id="IPR002141">
    <property type="entry name" value="Flu_NP"/>
</dbReference>
<dbReference type="Pfam" id="PF00506">
    <property type="entry name" value="Flu_NP"/>
    <property type="match status" value="1"/>
</dbReference>
<dbReference type="SUPFAM" id="SSF161003">
    <property type="entry name" value="flu NP-like"/>
    <property type="match status" value="1"/>
</dbReference>
<name>NCAP_I82A1</name>
<protein>
    <recommendedName>
        <fullName evidence="1">Nucleoprotein</fullName>
    </recommendedName>
    <alternativeName>
        <fullName evidence="1">Nucleocapsid protein</fullName>
        <shortName evidence="1">Protein N</shortName>
    </alternativeName>
</protein>
<accession>P69298</accession>
<accession>P15675</accession>
<accession>P16977</accession>
<organismHost>
    <name type="scientific">Aves</name>
    <dbReference type="NCBI Taxonomy" id="8782"/>
</organismHost>
<comment type="function">
    <text evidence="1">Encapsidates the negative strand viral RNA, protecting it from nucleases. The encapsidated genomic RNA is termed the ribonucleoprotein (RNP) and serves as template for transcription and replication. The RNP needs to be localized in the host nucleus to start an infectious cycle, but is too large to diffuse through the nuclear pore complex. NP comprises at least 2 nuclear localization signals that are responsible for the active RNP import into the nucleus through cellular importin alpha/beta pathway. Later in the infection, nclear export of RNPs are mediated through viral proteins NEP interacting with M1 which binds nucleoproteins. It is possible that nucleoprotein binds directly host exportin-1/XPO1 and plays an active role in RNPs nuclear export. M1 interaction with RNP seems to hide nucleoprotein's nuclear localization signals. Soon after a virion infects a new cell, M1 dissociates from the RNP under acidification of the virion driven by M2 protein. Dissociation of M1 from RNP unmasks nucleoprotein's nuclear localization signals, targeting the RNP to the nucleus.</text>
</comment>
<comment type="subunit">
    <text evidence="1">Homomultimerizes to form the nucleocapsid. May bind host exportin-1/XPO1. Binds to viral genomic RNA. Protein-RNA contacts are mediated by a combination of electrostatic interactions between positively charged residues and the phosphate backbone and planar interactions between aromatic side chains and bases.</text>
</comment>
<comment type="subcellular location">
    <subcellularLocation>
        <location evidence="1">Virion</location>
    </subcellularLocation>
    <subcellularLocation>
        <location evidence="1">Host nucleus</location>
    </subcellularLocation>
</comment>
<comment type="PTM">
    <text evidence="1">Late in virus-infected cells, may be cleaved from a 56-kDa protein to a 53-kDa protein by a cellular caspase. This cleavage might be a marker for the onset of apoptosis in infected cells or have a specific function in virus host interaction.</text>
</comment>
<comment type="similarity">
    <text evidence="1">Belongs to the influenza viruses nucleoprotein family.</text>
</comment>
<keyword id="KW-0167">Capsid protein</keyword>
<keyword id="KW-1139">Helical capsid protein</keyword>
<keyword id="KW-1048">Host nucleus</keyword>
<keyword id="KW-0945">Host-virus interaction</keyword>
<keyword id="KW-0687">Ribonucleoprotein</keyword>
<keyword id="KW-0694">RNA-binding</keyword>
<keyword id="KW-0543">Viral nucleoprotein</keyword>
<keyword id="KW-1163">Viral penetration into host nucleus</keyword>
<keyword id="KW-0946">Virion</keyword>
<keyword id="KW-1160">Virus entry into host cell</keyword>
<evidence type="ECO:0000255" key="1">
    <source>
        <dbReference type="HAMAP-Rule" id="MF_04070"/>
    </source>
</evidence>
<evidence type="ECO:0000256" key="2">
    <source>
        <dbReference type="SAM" id="MobiDB-lite"/>
    </source>
</evidence>
<reference key="1">
    <citation type="journal article" date="1991" name="J. Virol.">
        <title>Evolution of influenza A virus nucleoprotein genes: implications for the origins of H1N1 human and classical swine viruses.</title>
        <authorList>
            <person name="Gorman O.T."/>
            <person name="Bean W.J."/>
            <person name="Kawaoka Y."/>
            <person name="Donatelli I."/>
            <person name="Guo Y."/>
            <person name="Webster R.G."/>
        </authorList>
    </citation>
    <scope>NUCLEOTIDE SEQUENCE [GENOMIC RNA]</scope>
</reference>